<comment type="function">
    <text evidence="1">Part of the ABC transporter complex MglABC involved in galactose/methyl galactoside import. Responsible for energy coupling to the transport system.</text>
</comment>
<comment type="catalytic activity">
    <reaction evidence="1">
        <text>D-galactose(out) + ATP + H2O = D-galactose(in) + ADP + phosphate + H(+)</text>
        <dbReference type="Rhea" id="RHEA:60156"/>
        <dbReference type="ChEBI" id="CHEBI:4139"/>
        <dbReference type="ChEBI" id="CHEBI:15377"/>
        <dbReference type="ChEBI" id="CHEBI:15378"/>
        <dbReference type="ChEBI" id="CHEBI:30616"/>
        <dbReference type="ChEBI" id="CHEBI:43474"/>
        <dbReference type="ChEBI" id="CHEBI:456216"/>
        <dbReference type="EC" id="7.5.2.11"/>
    </reaction>
    <physiologicalReaction direction="left-to-right" evidence="1">
        <dbReference type="Rhea" id="RHEA:60157"/>
    </physiologicalReaction>
</comment>
<comment type="catalytic activity">
    <reaction evidence="1">
        <text>methyl beta-D-galactoside(out) + ATP + H2O = methyl beta-D-galactoside(in) + ADP + phosphate + H(+)</text>
        <dbReference type="Rhea" id="RHEA:72531"/>
        <dbReference type="ChEBI" id="CHEBI:15377"/>
        <dbReference type="ChEBI" id="CHEBI:15378"/>
        <dbReference type="ChEBI" id="CHEBI:17540"/>
        <dbReference type="ChEBI" id="CHEBI:30616"/>
        <dbReference type="ChEBI" id="CHEBI:43474"/>
        <dbReference type="ChEBI" id="CHEBI:456216"/>
    </reaction>
    <physiologicalReaction direction="left-to-right" evidence="1">
        <dbReference type="Rhea" id="RHEA:72532"/>
    </physiologicalReaction>
</comment>
<comment type="subunit">
    <text evidence="1">The complex is composed of one ATP-binding protein (MglA), two transmembrane proteins (MglC) and a solute-binding protein (MglB).</text>
</comment>
<comment type="subcellular location">
    <subcellularLocation>
        <location evidence="1">Cell membrane</location>
        <topology evidence="1">Peripheral membrane protein</topology>
    </subcellularLocation>
</comment>
<comment type="similarity">
    <text evidence="1">Belongs to the ABC transporter superfamily. Galactose/methyl galactoside importer (TC 3.A.1.2.3) family.</text>
</comment>
<protein>
    <recommendedName>
        <fullName evidence="1">Galactose/methyl galactoside import ATP-binding protein MglA</fullName>
        <ecNumber evidence="1">7.5.2.11</ecNumber>
    </recommendedName>
</protein>
<proteinExistence type="inferred from homology"/>
<gene>
    <name evidence="1" type="primary">mglA</name>
    <name type="ordered locus">CPR_1342</name>
</gene>
<keyword id="KW-0067">ATP-binding</keyword>
<keyword id="KW-1003">Cell membrane</keyword>
<keyword id="KW-0472">Membrane</keyword>
<keyword id="KW-0547">Nucleotide-binding</keyword>
<keyword id="KW-0677">Repeat</keyword>
<keyword id="KW-0762">Sugar transport</keyword>
<keyword id="KW-1278">Translocase</keyword>
<keyword id="KW-0813">Transport</keyword>
<accession>Q0ST95</accession>
<sequence length="515" mass="57625">MKDSSNLLEMRNISKEFPGVKALDNVTLKVKKGSVHALMGENGAGKSTLMKCLFGIYHPNSGEIFISGQKVQFKNSKHALDNGVSMVHQELNQVRERNVMDNLWLGRYPKKGLFIDEKKMYDETEKIFKDLDINVNPRDKVSTLSVSQMQMVEIAKAVSYKSKIIVMDEPTSSLTEKEVSHLFKIINKLRKQGISIIYISHKMEEILEISDEVTIMRDGKWIATEKASDLTMDLIIKLMVGRELTDRFPKKDHIPKETILEVNNLSDAKNELKNVSFKLRKGEILGIAGLVGAKRTETLETLFGLREKGSGDIILHGKKVDNSKPFKAMQNGFALVTEERRQTGIFGKLPIDFNSIIANIDSYKTSTGLLSNGRISKDTQWVINSMKVKTPSQKTLIGSLSGGNQQKIVIGKWLLRKPEILLLDEPTRGIDVGAKFEIYQLINELAKEDKGIIMVSSEMPELLGVCDRILVMSNGMISGIVNANQTTQEEIMHLSAKYLSVTGGVNNANQIKEKV</sequence>
<feature type="chain" id="PRO_0000261361" description="Galactose/methyl galactoside import ATP-binding protein MglA">
    <location>
        <begin position="1"/>
        <end position="515"/>
    </location>
</feature>
<feature type="domain" description="ABC transporter 1" evidence="1">
    <location>
        <begin position="8"/>
        <end position="243"/>
    </location>
</feature>
<feature type="domain" description="ABC transporter 2" evidence="1">
    <location>
        <begin position="254"/>
        <end position="499"/>
    </location>
</feature>
<feature type="binding site" evidence="1">
    <location>
        <begin position="40"/>
        <end position="47"/>
    </location>
    <ligand>
        <name>ATP</name>
        <dbReference type="ChEBI" id="CHEBI:30616"/>
    </ligand>
</feature>
<reference key="1">
    <citation type="journal article" date="2006" name="Genome Res.">
        <title>Skewed genomic variability in strains of the toxigenic bacterial pathogen, Clostridium perfringens.</title>
        <authorList>
            <person name="Myers G.S.A."/>
            <person name="Rasko D.A."/>
            <person name="Cheung J.K."/>
            <person name="Ravel J."/>
            <person name="Seshadri R."/>
            <person name="DeBoy R.T."/>
            <person name="Ren Q."/>
            <person name="Varga J."/>
            <person name="Awad M.M."/>
            <person name="Brinkac L.M."/>
            <person name="Daugherty S.C."/>
            <person name="Haft D.H."/>
            <person name="Dodson R.J."/>
            <person name="Madupu R."/>
            <person name="Nelson W.C."/>
            <person name="Rosovitz M.J."/>
            <person name="Sullivan S.A."/>
            <person name="Khouri H."/>
            <person name="Dimitrov G.I."/>
            <person name="Watkins K.L."/>
            <person name="Mulligan S."/>
            <person name="Benton J."/>
            <person name="Radune D."/>
            <person name="Fisher D.J."/>
            <person name="Atkins H.S."/>
            <person name="Hiscox T."/>
            <person name="Jost B.H."/>
            <person name="Billington S.J."/>
            <person name="Songer J.G."/>
            <person name="McClane B.A."/>
            <person name="Titball R.W."/>
            <person name="Rood J.I."/>
            <person name="Melville S.B."/>
            <person name="Paulsen I.T."/>
        </authorList>
    </citation>
    <scope>NUCLEOTIDE SEQUENCE [LARGE SCALE GENOMIC DNA]</scope>
    <source>
        <strain>SM101 / Type A</strain>
    </source>
</reference>
<name>MGLA_CLOPS</name>
<evidence type="ECO:0000255" key="1">
    <source>
        <dbReference type="HAMAP-Rule" id="MF_01717"/>
    </source>
</evidence>
<dbReference type="EC" id="7.5.2.11" evidence="1"/>
<dbReference type="EMBL" id="CP000312">
    <property type="protein sequence ID" value="ABG86948.1"/>
    <property type="molecule type" value="Genomic_DNA"/>
</dbReference>
<dbReference type="RefSeq" id="WP_011592319.1">
    <property type="nucleotide sequence ID" value="NC_008262.1"/>
</dbReference>
<dbReference type="SMR" id="Q0ST95"/>
<dbReference type="KEGG" id="cpr:CPR_1342"/>
<dbReference type="Proteomes" id="UP000001824">
    <property type="component" value="Chromosome"/>
</dbReference>
<dbReference type="GO" id="GO:0005886">
    <property type="term" value="C:plasma membrane"/>
    <property type="evidence" value="ECO:0007669"/>
    <property type="project" value="UniProtKB-SubCell"/>
</dbReference>
<dbReference type="GO" id="GO:0005524">
    <property type="term" value="F:ATP binding"/>
    <property type="evidence" value="ECO:0007669"/>
    <property type="project" value="UniProtKB-KW"/>
</dbReference>
<dbReference type="GO" id="GO:0016887">
    <property type="term" value="F:ATP hydrolysis activity"/>
    <property type="evidence" value="ECO:0007669"/>
    <property type="project" value="InterPro"/>
</dbReference>
<dbReference type="CDD" id="cd03216">
    <property type="entry name" value="ABC_Carb_Monos_I"/>
    <property type="match status" value="1"/>
</dbReference>
<dbReference type="CDD" id="cd03215">
    <property type="entry name" value="ABC_Carb_Monos_II"/>
    <property type="match status" value="1"/>
</dbReference>
<dbReference type="FunFam" id="3.40.50.300:FF:000126">
    <property type="entry name" value="Galactose/methyl galactoside import ATP-binding protein MglA"/>
    <property type="match status" value="1"/>
</dbReference>
<dbReference type="FunFam" id="3.40.50.300:FF:000127">
    <property type="entry name" value="Ribose import ATP-binding protein RbsA"/>
    <property type="match status" value="1"/>
</dbReference>
<dbReference type="Gene3D" id="3.40.50.300">
    <property type="entry name" value="P-loop containing nucleotide triphosphate hydrolases"/>
    <property type="match status" value="2"/>
</dbReference>
<dbReference type="InterPro" id="IPR003593">
    <property type="entry name" value="AAA+_ATPase"/>
</dbReference>
<dbReference type="InterPro" id="IPR050107">
    <property type="entry name" value="ABC_carbohydrate_import_ATPase"/>
</dbReference>
<dbReference type="InterPro" id="IPR003439">
    <property type="entry name" value="ABC_transporter-like_ATP-bd"/>
</dbReference>
<dbReference type="InterPro" id="IPR017871">
    <property type="entry name" value="ABC_transporter-like_CS"/>
</dbReference>
<dbReference type="InterPro" id="IPR027417">
    <property type="entry name" value="P-loop_NTPase"/>
</dbReference>
<dbReference type="NCBIfam" id="NF008215">
    <property type="entry name" value="PRK10982.1"/>
    <property type="match status" value="1"/>
</dbReference>
<dbReference type="PANTHER" id="PTHR43790">
    <property type="entry name" value="CARBOHYDRATE TRANSPORT ATP-BINDING PROTEIN MG119-RELATED"/>
    <property type="match status" value="1"/>
</dbReference>
<dbReference type="PANTHER" id="PTHR43790:SF7">
    <property type="entry name" value="GALACTOSE_METHYL GALACTOSIDE IMPORT ATP-BINDING PROTEIN MGLA"/>
    <property type="match status" value="1"/>
</dbReference>
<dbReference type="Pfam" id="PF00005">
    <property type="entry name" value="ABC_tran"/>
    <property type="match status" value="2"/>
</dbReference>
<dbReference type="SMART" id="SM00382">
    <property type="entry name" value="AAA"/>
    <property type="match status" value="2"/>
</dbReference>
<dbReference type="SUPFAM" id="SSF52540">
    <property type="entry name" value="P-loop containing nucleoside triphosphate hydrolases"/>
    <property type="match status" value="2"/>
</dbReference>
<dbReference type="PROSITE" id="PS00211">
    <property type="entry name" value="ABC_TRANSPORTER_1"/>
    <property type="match status" value="1"/>
</dbReference>
<dbReference type="PROSITE" id="PS50893">
    <property type="entry name" value="ABC_TRANSPORTER_2"/>
    <property type="match status" value="2"/>
</dbReference>
<dbReference type="PROSITE" id="PS51260">
    <property type="entry name" value="MGLA"/>
    <property type="match status" value="1"/>
</dbReference>
<organism>
    <name type="scientific">Clostridium perfringens (strain SM101 / Type A)</name>
    <dbReference type="NCBI Taxonomy" id="289380"/>
    <lineage>
        <taxon>Bacteria</taxon>
        <taxon>Bacillati</taxon>
        <taxon>Bacillota</taxon>
        <taxon>Clostridia</taxon>
        <taxon>Eubacteriales</taxon>
        <taxon>Clostridiaceae</taxon>
        <taxon>Clostridium</taxon>
    </lineage>
</organism>